<keyword id="KW-0143">Chaperone</keyword>
<keyword id="KW-0472">Membrane</keyword>
<keyword id="KW-0496">Mitochondrion</keyword>
<keyword id="KW-0999">Mitochondrion inner membrane</keyword>
<keyword id="KW-0812">Transmembrane</keyword>
<keyword id="KW-1133">Transmembrane helix</keyword>
<protein>
    <recommendedName>
        <fullName>Assembly factor CBP4</fullName>
    </recommendedName>
    <alternativeName>
        <fullName>Cytochrome b mRNA-processing protein 4</fullName>
    </alternativeName>
</protein>
<dbReference type="EMBL" id="AAFW02000100">
    <property type="protein sequence ID" value="EDN61763.1"/>
    <property type="status" value="ALT_INIT"/>
    <property type="molecule type" value="Genomic_DNA"/>
</dbReference>
<dbReference type="SMR" id="A6ZUI6"/>
<dbReference type="HOGENOM" id="CLU_147520_0_0_1"/>
<dbReference type="OrthoDB" id="7422at4893"/>
<dbReference type="Proteomes" id="UP000007060">
    <property type="component" value="Unassembled WGS sequence"/>
</dbReference>
<dbReference type="GO" id="GO:0005743">
    <property type="term" value="C:mitochondrial inner membrane"/>
    <property type="evidence" value="ECO:0007669"/>
    <property type="project" value="UniProtKB-SubCell"/>
</dbReference>
<dbReference type="GO" id="GO:0034551">
    <property type="term" value="P:mitochondrial respiratory chain complex III assembly"/>
    <property type="evidence" value="ECO:0007669"/>
    <property type="project" value="TreeGrafter"/>
</dbReference>
<dbReference type="InterPro" id="IPR012420">
    <property type="entry name" value="Cbp4"/>
</dbReference>
<dbReference type="PANTHER" id="PTHR28202">
    <property type="entry name" value="ASSEMBLY FACTOR CBP4"/>
    <property type="match status" value="1"/>
</dbReference>
<dbReference type="PANTHER" id="PTHR28202:SF1">
    <property type="entry name" value="ASSEMBLY FACTOR CBP4"/>
    <property type="match status" value="1"/>
</dbReference>
<dbReference type="Pfam" id="PF07960">
    <property type="entry name" value="CBP4"/>
    <property type="match status" value="1"/>
</dbReference>
<accession>A6ZUI6</accession>
<gene>
    <name type="primary">CBP4</name>
    <name type="ORF">SCY_2069</name>
</gene>
<comment type="function">
    <text evidence="1">Essential for the assembly of ubiquinol-cytochrome c reductase. It has a direct effect on the correct occurrence of the Rieske protein, core 4, core 5 and apocytochrome b (By similarity).</text>
</comment>
<comment type="subcellular location">
    <subcellularLocation>
        <location evidence="1">Mitochondrion inner membrane</location>
        <topology evidence="1">Single-pass membrane protein</topology>
    </subcellularLocation>
</comment>
<comment type="similarity">
    <text evidence="4">Belongs to the CBP4 family.</text>
</comment>
<comment type="sequence caution" evidence="4">
    <conflict type="erroneous initiation">
        <sequence resource="EMBL-CDS" id="EDN61763"/>
    </conflict>
</comment>
<reference key="1">
    <citation type="journal article" date="2007" name="Proc. Natl. Acad. Sci. U.S.A.">
        <title>Genome sequencing and comparative analysis of Saccharomyces cerevisiae strain YJM789.</title>
        <authorList>
            <person name="Wei W."/>
            <person name="McCusker J.H."/>
            <person name="Hyman R.W."/>
            <person name="Jones T."/>
            <person name="Ning Y."/>
            <person name="Cao Z."/>
            <person name="Gu Z."/>
            <person name="Bruno D."/>
            <person name="Miranda M."/>
            <person name="Nguyen M."/>
            <person name="Wilhelmy J."/>
            <person name="Komp C."/>
            <person name="Tamse R."/>
            <person name="Wang X."/>
            <person name="Jia P."/>
            <person name="Luedi P."/>
            <person name="Oefner P.J."/>
            <person name="David L."/>
            <person name="Dietrich F.S."/>
            <person name="Li Y."/>
            <person name="Davis R.W."/>
            <person name="Steinmetz L.M."/>
        </authorList>
    </citation>
    <scope>NUCLEOTIDE SEQUENCE [LARGE SCALE GENOMIC DNA]</scope>
    <source>
        <strain>YJM789</strain>
    </source>
</reference>
<name>CBP4_YEAS7</name>
<sequence length="147" mass="17532">MERPLWVRWLKVYAIGGAIIGSGFLLFKYTTPTDQQLISQLSPELRLQYEREKKLRQSEQQALMKIVKETSQSDDPIWKTGPLQSPWERNGDNVQSRDHFAKVRAEEVQKEELARIRNELSQLRSETEEKTKEIVQDKQVKSWWRFW</sequence>
<proteinExistence type="inferred from homology"/>
<organism>
    <name type="scientific">Saccharomyces cerevisiae (strain YJM789)</name>
    <name type="common">Baker's yeast</name>
    <dbReference type="NCBI Taxonomy" id="307796"/>
    <lineage>
        <taxon>Eukaryota</taxon>
        <taxon>Fungi</taxon>
        <taxon>Dikarya</taxon>
        <taxon>Ascomycota</taxon>
        <taxon>Saccharomycotina</taxon>
        <taxon>Saccharomycetes</taxon>
        <taxon>Saccharomycetales</taxon>
        <taxon>Saccharomycetaceae</taxon>
        <taxon>Saccharomyces</taxon>
    </lineage>
</organism>
<feature type="chain" id="PRO_0000330141" description="Assembly factor CBP4">
    <location>
        <begin position="1"/>
        <end position="147"/>
    </location>
</feature>
<feature type="transmembrane region" description="Helical" evidence="2">
    <location>
        <begin position="5"/>
        <end position="27"/>
    </location>
</feature>
<feature type="region of interest" description="Disordered" evidence="3">
    <location>
        <begin position="73"/>
        <end position="94"/>
    </location>
</feature>
<evidence type="ECO:0000250" key="1"/>
<evidence type="ECO:0000255" key="2"/>
<evidence type="ECO:0000256" key="3">
    <source>
        <dbReference type="SAM" id="MobiDB-lite"/>
    </source>
</evidence>
<evidence type="ECO:0000305" key="4"/>